<reference key="1">
    <citation type="journal article" date="1989" name="Gene">
        <title>Sequence analysis of the Clostridium cellulolyticum endoglucanase-A-encoding gene, celCCA.</title>
        <authorList>
            <person name="Faure E."/>
            <person name="Belaich A."/>
            <person name="Bagnara C."/>
            <person name="Gaudin C."/>
            <person name="Belaich J.-P."/>
        </authorList>
    </citation>
    <scope>NUCLEOTIDE SEQUENCE [GENOMIC DNA]</scope>
    <scope>PROTEIN SEQUENCE OF 27-39</scope>
</reference>
<reference key="2">
    <citation type="submission" date="2009-01" db="EMBL/GenBank/DDBJ databases">
        <title>Complete sequence of Clostridium cellulolyticum H10.</title>
        <authorList>
            <consortium name="US DOE Joint Genome Institute"/>
            <person name="Lucas S."/>
            <person name="Copeland A."/>
            <person name="Lapidus A."/>
            <person name="Glavina del Rio T."/>
            <person name="Dalin E."/>
            <person name="Tice H."/>
            <person name="Bruce D."/>
            <person name="Goodwin L."/>
            <person name="Pitluck S."/>
            <person name="Chertkov O."/>
            <person name="Saunders E."/>
            <person name="Brettin T."/>
            <person name="Detter J.C."/>
            <person name="Han C."/>
            <person name="Larimer F."/>
            <person name="Land M."/>
            <person name="Hauser L."/>
            <person name="Kyrpides N."/>
            <person name="Ivanova N."/>
            <person name="Zhou J."/>
            <person name="Richardson P."/>
        </authorList>
    </citation>
    <scope>NUCLEOTIDE SEQUENCE [LARGE SCALE GENOMIC DNA]</scope>
    <source>
        <strain>ATCC 35319 / DSM 5812 / JCM 6584 / H10</strain>
    </source>
</reference>
<reference key="3">
    <citation type="journal article" date="1991" name="J. Bacteriol.">
        <title>Characterization of endoglucanase A from Clostridium cellulolyticum.</title>
        <authorList>
            <person name="Fierobe H.-P."/>
            <person name="Gaudin C."/>
            <person name="Belaich A."/>
            <person name="Loufti M."/>
            <person name="Faure E."/>
            <person name="Bagnara C."/>
            <person name="Baty D."/>
            <person name="Belaich J.-P."/>
        </authorList>
    </citation>
    <scope>CHARACTERIZATION</scope>
</reference>
<reference key="4">
    <citation type="journal article" date="1992" name="J. Bacteriol.">
        <title>The catalytic domain of endoglucanase A from Clostridium cellulolyticum: effects of arginine 79 and histidine 122 mutations on catalysis.</title>
        <authorList>
            <person name="Belaich A."/>
            <person name="Fierobe H.-P."/>
            <person name="Baty D."/>
            <person name="Busetta B."/>
            <person name="Bagnara-Tardif C."/>
            <person name="Gaudin C."/>
            <person name="Belaich J.-P."/>
        </authorList>
    </citation>
    <scope>MUTAGENESIS OF ARG-104; HIS-147 AND HIS-148</scope>
</reference>
<reference key="5">
    <citation type="journal article" date="1995" name="Structure">
        <title>Crystal structure of the catalytic domain of a bacterial cellulase belonging to family 5.</title>
        <authorList>
            <person name="Ducros V."/>
            <person name="Czjzek M."/>
            <person name="Belaich A."/>
            <person name="Gaudin C."/>
            <person name="Fierobe H.P."/>
            <person name="Belaich J.-P."/>
            <person name="Davies G.J."/>
            <person name="Haser R."/>
        </authorList>
    </citation>
    <scope>X-RAY CRYSTALLOGRAPHY (1.6 ANGSTROMS) OF 27-406</scope>
</reference>
<comment type="function">
    <text>The biological conversion of cellulose to glucose generally requires three types of hydrolytic enzymes: (1) Endoglucanases which cut internal beta-1,4-glucosidic bonds; (2) Exocellobiohydrolases that cut the disaccharide cellobiose from the non-reducing end of the cellulose polymer chain; (3) Beta-1,4-glucosidases which hydrolyze the cellobiose and other short cello-oligosaccharides to glucose.</text>
</comment>
<comment type="catalytic activity">
    <reaction>
        <text>Endohydrolysis of (1-&gt;4)-beta-D-glucosidic linkages in cellulose, lichenin and cereal beta-D-glucans.</text>
        <dbReference type="EC" id="3.2.1.4"/>
    </reaction>
</comment>
<comment type="miscellaneous">
    <text>The C-terminus (AA 411-475) may play a role in organizing the cellulosome complex.</text>
</comment>
<comment type="similarity">
    <text evidence="4">Belongs to the glycosyl hydrolase 5 (cellulase A) family.</text>
</comment>
<feature type="signal peptide" evidence="3">
    <location>
        <begin position="1"/>
        <end position="26"/>
    </location>
</feature>
<feature type="chain" id="PRO_0000007845" description="Endoglucanase A">
    <location>
        <begin position="27"/>
        <end position="475"/>
    </location>
</feature>
<feature type="domain" description="Dockerin" evidence="1">
    <location>
        <begin position="409"/>
        <end position="474"/>
    </location>
</feature>
<feature type="active site" evidence="4">
    <location>
        <position position="147"/>
    </location>
</feature>
<feature type="active site" description="Proton donor">
    <location>
        <position position="195"/>
    </location>
</feature>
<feature type="active site" description="Nucleophile">
    <location>
        <position position="332"/>
    </location>
</feature>
<feature type="mutagenesis site" description="Small loss of activity." evidence="2">
    <original>R</original>
    <variation>K</variation>
    <location>
        <position position="104"/>
    </location>
</feature>
<feature type="mutagenesis site" description="Large decrease of activity." evidence="2">
    <original>R</original>
    <variation>S</variation>
    <variation>V</variation>
    <location>
        <position position="104"/>
    </location>
</feature>
<feature type="mutagenesis site" description="Total loss of activity." evidence="2">
    <original>H</original>
    <variation>S</variation>
    <variation>E</variation>
    <variation>G</variation>
    <variation>F</variation>
    <location>
        <position position="147"/>
    </location>
</feature>
<feature type="mutagenesis site" description="Large decrease of activity." evidence="2">
    <original>H</original>
    <variation>V</variation>
    <location>
        <position position="148"/>
    </location>
</feature>
<feature type="helix" evidence="5">
    <location>
        <begin position="29"/>
        <end position="31"/>
    </location>
</feature>
<feature type="helix" evidence="5">
    <location>
        <begin position="46"/>
        <end position="54"/>
    </location>
</feature>
<feature type="strand" evidence="5">
    <location>
        <begin position="56"/>
        <end position="59"/>
    </location>
</feature>
<feature type="helix" evidence="5">
    <location>
        <begin position="75"/>
        <end position="77"/>
    </location>
</feature>
<feature type="helix" evidence="5">
    <location>
        <begin position="78"/>
        <end position="81"/>
    </location>
</feature>
<feature type="helix" evidence="5">
    <location>
        <begin position="89"/>
        <end position="98"/>
    </location>
</feature>
<feature type="strand" evidence="5">
    <location>
        <begin position="102"/>
        <end position="105"/>
    </location>
</feature>
<feature type="helix" evidence="5">
    <location>
        <begin position="110"/>
        <end position="112"/>
    </location>
</feature>
<feature type="turn" evidence="5">
    <location>
        <begin position="115"/>
        <end position="118"/>
    </location>
</feature>
<feature type="helix" evidence="5">
    <location>
        <begin position="122"/>
        <end position="136"/>
    </location>
</feature>
<feature type="turn" evidence="5">
    <location>
        <begin position="137"/>
        <end position="139"/>
    </location>
</feature>
<feature type="strand" evidence="5">
    <location>
        <begin position="141"/>
        <end position="145"/>
    </location>
</feature>
<feature type="turn" evidence="5">
    <location>
        <begin position="152"/>
        <end position="154"/>
    </location>
</feature>
<feature type="helix" evidence="5">
    <location>
        <begin position="160"/>
        <end position="162"/>
    </location>
</feature>
<feature type="helix" evidence="5">
    <location>
        <begin position="163"/>
        <end position="180"/>
    </location>
</feature>
<feature type="turn" evidence="5">
    <location>
        <begin position="181"/>
        <end position="183"/>
    </location>
</feature>
<feature type="strand" evidence="5">
    <location>
        <begin position="188"/>
        <end position="191"/>
    </location>
</feature>
<feature type="turn" evidence="5">
    <location>
        <begin position="202"/>
        <end position="205"/>
    </location>
</feature>
<feature type="helix" evidence="5">
    <location>
        <begin position="212"/>
        <end position="234"/>
    </location>
</feature>
<feature type="helix" evidence="5">
    <location>
        <begin position="237"/>
        <end position="240"/>
    </location>
</feature>
<feature type="strand" evidence="5">
    <location>
        <begin position="244"/>
        <end position="247"/>
    </location>
</feature>
<feature type="helix" evidence="5">
    <location>
        <begin position="249"/>
        <end position="251"/>
    </location>
</feature>
<feature type="helix" evidence="5">
    <location>
        <begin position="253"/>
        <end position="257"/>
    </location>
</feature>
<feature type="strand" evidence="5">
    <location>
        <begin position="274"/>
        <end position="279"/>
    </location>
</feature>
<feature type="helix" evidence="5">
    <location>
        <begin position="284"/>
        <end position="287"/>
    </location>
</feature>
<feature type="helix" evidence="5">
    <location>
        <begin position="291"/>
        <end position="293"/>
    </location>
</feature>
<feature type="helix" evidence="5">
    <location>
        <begin position="304"/>
        <end position="320"/>
    </location>
</feature>
<feature type="helix" evidence="5">
    <location>
        <begin position="322"/>
        <end position="324"/>
    </location>
</feature>
<feature type="strand" evidence="5">
    <location>
        <begin position="328"/>
        <end position="333"/>
    </location>
</feature>
<feature type="helix" evidence="5">
    <location>
        <begin position="341"/>
        <end position="357"/>
    </location>
</feature>
<feature type="strand" evidence="5">
    <location>
        <begin position="361"/>
        <end position="364"/>
    </location>
</feature>
<feature type="strand" evidence="5">
    <location>
        <begin position="371"/>
        <end position="374"/>
    </location>
</feature>
<feature type="turn" evidence="5">
    <location>
        <begin position="382"/>
        <end position="385"/>
    </location>
</feature>
<feature type="strand" evidence="5">
    <location>
        <begin position="386"/>
        <end position="389"/>
    </location>
</feature>
<feature type="helix" evidence="5">
    <location>
        <begin position="390"/>
        <end position="399"/>
    </location>
</feature>
<feature type="strand" evidence="6">
    <location>
        <begin position="418"/>
        <end position="420"/>
    </location>
</feature>
<feature type="helix" evidence="6">
    <location>
        <begin position="424"/>
        <end position="435"/>
    </location>
</feature>
<feature type="helix" evidence="6">
    <location>
        <begin position="443"/>
        <end position="445"/>
    </location>
</feature>
<feature type="helix" evidence="6">
    <location>
        <begin position="455"/>
        <end position="465"/>
    </location>
</feature>
<organism>
    <name type="scientific">Ruminiclostridium cellulolyticum (strain ATCC 35319 / DSM 5812 / JCM 6584 / H10)</name>
    <name type="common">Clostridium cellulolyticum</name>
    <dbReference type="NCBI Taxonomy" id="394503"/>
    <lineage>
        <taxon>Bacteria</taxon>
        <taxon>Bacillati</taxon>
        <taxon>Bacillota</taxon>
        <taxon>Clostridia</taxon>
        <taxon>Eubacteriales</taxon>
        <taxon>Oscillospiraceae</taxon>
        <taxon>Ruminiclostridium</taxon>
    </lineage>
</organism>
<sequence>MKKTTAFLLCFLMIFTALLPMQNANAYDASLIPNLQIPQKNIPNNDGMNFVKGLRLGWNLGNTFDAFNGTNITNELDYETSWSGIKTTKQMIDAIKQKGFNTVRIPVSWHPHVSGSDYKISDVWMNRVQEVVNYCIDNKMYVILNTHHDVDKVKGYFPSSQYMASSKKYITSVWAQIAARFANYDEHLIFEGMNEPRLVGHANEWWPELTNSDVVDSINCINQLNQDFVNTVRATGGKNASRYLMCPGYVASPDGATNDYFRMPNDISGNNNKIIVSVHAYCPWNFAGLAMADGGTNAWNINDSKDQSEVTWFMDNIYNKYTSRGIPVIIGECGAVDKNNLKTRVEYMSYYVAQAKARGILCILWDNNNFSGTGELFGFFDRRSCQFKFPEIIDGMVKYAFEAKTDPDPVIVYGDYNNDGNVDALDFAGLKKYIMAADHAYVKNLDVNLDNEVNAFDLAILKKYLLGMVSKLPSN</sequence>
<accession>P17901</accession>
<accession>B8HZV8</accession>
<gene>
    <name type="primary">celCCA</name>
    <name type="ordered locus">Ccel_1099</name>
</gene>
<evidence type="ECO:0000255" key="1">
    <source>
        <dbReference type="PROSITE-ProRule" id="PRU01102"/>
    </source>
</evidence>
<evidence type="ECO:0000269" key="2">
    <source>
    </source>
</evidence>
<evidence type="ECO:0000269" key="3">
    <source>
    </source>
</evidence>
<evidence type="ECO:0000305" key="4"/>
<evidence type="ECO:0007829" key="5">
    <source>
        <dbReference type="PDB" id="1EDG"/>
    </source>
</evidence>
<evidence type="ECO:0007829" key="6">
    <source>
        <dbReference type="PDB" id="2VN6"/>
    </source>
</evidence>
<protein>
    <recommendedName>
        <fullName>Endoglucanase A</fullName>
        <ecNumber>3.2.1.4</ecNumber>
    </recommendedName>
    <alternativeName>
        <fullName>Cellulase A</fullName>
    </alternativeName>
    <alternativeName>
        <fullName>EGCCA</fullName>
    </alternativeName>
    <alternativeName>
        <fullName>Endo-1,4-beta-glucanase A</fullName>
    </alternativeName>
</protein>
<dbReference type="EC" id="3.2.1.4"/>
<dbReference type="EMBL" id="M93096">
    <property type="protein sequence ID" value="AAA51444.1"/>
    <property type="molecule type" value="Genomic_DNA"/>
</dbReference>
<dbReference type="EMBL" id="M32362">
    <property type="protein sequence ID" value="AAA23221.1"/>
    <property type="molecule type" value="Genomic_DNA"/>
</dbReference>
<dbReference type="EMBL" id="CP001348">
    <property type="protein sequence ID" value="ACL75458.1"/>
    <property type="molecule type" value="Genomic_DNA"/>
</dbReference>
<dbReference type="RefSeq" id="WP_015924614.1">
    <property type="nucleotide sequence ID" value="NC_011898.1"/>
</dbReference>
<dbReference type="PDB" id="1EDG">
    <property type="method" value="X-ray"/>
    <property type="resolution" value="1.60 A"/>
    <property type="chains" value="A=27-401"/>
</dbReference>
<dbReference type="PDB" id="2VN5">
    <property type="method" value="X-ray"/>
    <property type="resolution" value="1.90 A"/>
    <property type="chains" value="B/D=410-475"/>
</dbReference>
<dbReference type="PDB" id="2VN6">
    <property type="method" value="X-ray"/>
    <property type="resolution" value="1.49 A"/>
    <property type="chains" value="B=410-472"/>
</dbReference>
<dbReference type="PDBsum" id="1EDG"/>
<dbReference type="PDBsum" id="2VN5"/>
<dbReference type="PDBsum" id="2VN6"/>
<dbReference type="SMR" id="P17901"/>
<dbReference type="STRING" id="394503.Ccel_1099"/>
<dbReference type="CAZy" id="GH5">
    <property type="family name" value="Glycoside Hydrolase Family 5"/>
</dbReference>
<dbReference type="KEGG" id="cce:Ccel_1099"/>
<dbReference type="eggNOG" id="COG2730">
    <property type="taxonomic scope" value="Bacteria"/>
</dbReference>
<dbReference type="HOGENOM" id="CLU_018668_3_1_9"/>
<dbReference type="OrthoDB" id="9800955at2"/>
<dbReference type="EvolutionaryTrace" id="P17901"/>
<dbReference type="Proteomes" id="UP000001349">
    <property type="component" value="Chromosome"/>
</dbReference>
<dbReference type="GO" id="GO:0009986">
    <property type="term" value="C:cell surface"/>
    <property type="evidence" value="ECO:0007669"/>
    <property type="project" value="TreeGrafter"/>
</dbReference>
<dbReference type="GO" id="GO:0005576">
    <property type="term" value="C:extracellular region"/>
    <property type="evidence" value="ECO:0007669"/>
    <property type="project" value="TreeGrafter"/>
</dbReference>
<dbReference type="GO" id="GO:0008422">
    <property type="term" value="F:beta-glucosidase activity"/>
    <property type="evidence" value="ECO:0007669"/>
    <property type="project" value="TreeGrafter"/>
</dbReference>
<dbReference type="GO" id="GO:0008810">
    <property type="term" value="F:cellulase activity"/>
    <property type="evidence" value="ECO:0007669"/>
    <property type="project" value="UniProtKB-EC"/>
</dbReference>
<dbReference type="GO" id="GO:0030245">
    <property type="term" value="P:cellulose catabolic process"/>
    <property type="evidence" value="ECO:0007669"/>
    <property type="project" value="UniProtKB-KW"/>
</dbReference>
<dbReference type="CDD" id="cd14253">
    <property type="entry name" value="Dockerin"/>
    <property type="match status" value="1"/>
</dbReference>
<dbReference type="Gene3D" id="1.10.1330.10">
    <property type="entry name" value="Dockerin domain"/>
    <property type="match status" value="1"/>
</dbReference>
<dbReference type="Gene3D" id="3.20.20.80">
    <property type="entry name" value="Glycosidases"/>
    <property type="match status" value="1"/>
</dbReference>
<dbReference type="InterPro" id="IPR002105">
    <property type="entry name" value="Dockerin_1_rpt"/>
</dbReference>
<dbReference type="InterPro" id="IPR016134">
    <property type="entry name" value="Dockerin_dom"/>
</dbReference>
<dbReference type="InterPro" id="IPR036439">
    <property type="entry name" value="Dockerin_dom_sf"/>
</dbReference>
<dbReference type="InterPro" id="IPR018247">
    <property type="entry name" value="EF_Hand_1_Ca_BS"/>
</dbReference>
<dbReference type="InterPro" id="IPR001547">
    <property type="entry name" value="Glyco_hydro_5"/>
</dbReference>
<dbReference type="InterPro" id="IPR018087">
    <property type="entry name" value="Glyco_hydro_5_CS"/>
</dbReference>
<dbReference type="InterPro" id="IPR017853">
    <property type="entry name" value="Glycoside_hydrolase_SF"/>
</dbReference>
<dbReference type="InterPro" id="IPR050386">
    <property type="entry name" value="Glycosyl_hydrolase_5"/>
</dbReference>
<dbReference type="PANTHER" id="PTHR31297:SF41">
    <property type="entry name" value="ENDOGLUCANASE, PUTATIVE (AFU_ORTHOLOGUE AFUA_5G01830)-RELATED"/>
    <property type="match status" value="1"/>
</dbReference>
<dbReference type="PANTHER" id="PTHR31297">
    <property type="entry name" value="GLUCAN ENDO-1,6-BETA-GLUCOSIDASE B"/>
    <property type="match status" value="1"/>
</dbReference>
<dbReference type="Pfam" id="PF00150">
    <property type="entry name" value="Cellulase"/>
    <property type="match status" value="1"/>
</dbReference>
<dbReference type="Pfam" id="PF00404">
    <property type="entry name" value="Dockerin_1"/>
    <property type="match status" value="1"/>
</dbReference>
<dbReference type="SUPFAM" id="SSF51445">
    <property type="entry name" value="(Trans)glycosidases"/>
    <property type="match status" value="1"/>
</dbReference>
<dbReference type="SUPFAM" id="SSF63446">
    <property type="entry name" value="Type I dockerin domain"/>
    <property type="match status" value="1"/>
</dbReference>
<dbReference type="PROSITE" id="PS00448">
    <property type="entry name" value="CLOS_CELLULOSOME_RPT"/>
    <property type="match status" value="2"/>
</dbReference>
<dbReference type="PROSITE" id="PS51766">
    <property type="entry name" value="DOCKERIN"/>
    <property type="match status" value="1"/>
</dbReference>
<dbReference type="PROSITE" id="PS00018">
    <property type="entry name" value="EF_HAND_1"/>
    <property type="match status" value="1"/>
</dbReference>
<dbReference type="PROSITE" id="PS00659">
    <property type="entry name" value="GLYCOSYL_HYDROL_F5"/>
    <property type="match status" value="1"/>
</dbReference>
<name>GUNA_RUMCH</name>
<keyword id="KW-0002">3D-structure</keyword>
<keyword id="KW-0119">Carbohydrate metabolism</keyword>
<keyword id="KW-0136">Cellulose degradation</keyword>
<keyword id="KW-0903">Direct protein sequencing</keyword>
<keyword id="KW-0326">Glycosidase</keyword>
<keyword id="KW-0378">Hydrolase</keyword>
<keyword id="KW-0624">Polysaccharide degradation</keyword>
<keyword id="KW-1185">Reference proteome</keyword>
<keyword id="KW-0732">Signal</keyword>
<proteinExistence type="evidence at protein level"/>